<proteinExistence type="inferred from homology"/>
<evidence type="ECO:0000250" key="1"/>
<evidence type="ECO:0000255" key="2">
    <source>
        <dbReference type="PROSITE-ProRule" id="PRU00541"/>
    </source>
</evidence>
<evidence type="ECO:0000255" key="3">
    <source>
        <dbReference type="PROSITE-ProRule" id="PRU00542"/>
    </source>
</evidence>
<evidence type="ECO:0000256" key="4">
    <source>
        <dbReference type="SAM" id="MobiDB-lite"/>
    </source>
</evidence>
<evidence type="ECO:0000305" key="5"/>
<accession>Q6FST5</accession>
<organism>
    <name type="scientific">Candida glabrata (strain ATCC 2001 / BCRC 20586 / JCM 3761 / NBRC 0622 / NRRL Y-65 / CBS 138)</name>
    <name type="common">Yeast</name>
    <name type="synonym">Nakaseomyces glabratus</name>
    <dbReference type="NCBI Taxonomy" id="284593"/>
    <lineage>
        <taxon>Eukaryota</taxon>
        <taxon>Fungi</taxon>
        <taxon>Dikarya</taxon>
        <taxon>Ascomycota</taxon>
        <taxon>Saccharomycotina</taxon>
        <taxon>Saccharomycetes</taxon>
        <taxon>Saccharomycetales</taxon>
        <taxon>Saccharomycetaceae</taxon>
        <taxon>Nakaseomyces</taxon>
    </lineage>
</organism>
<keyword id="KW-0067">ATP-binding</keyword>
<keyword id="KW-0347">Helicase</keyword>
<keyword id="KW-0378">Hydrolase</keyword>
<keyword id="KW-0547">Nucleotide-binding</keyword>
<keyword id="KW-0539">Nucleus</keyword>
<keyword id="KW-1185">Reference proteome</keyword>
<keyword id="KW-0690">Ribosome biogenesis</keyword>
<keyword id="KW-0694">RNA-binding</keyword>
<keyword id="KW-0698">rRNA processing</keyword>
<reference key="1">
    <citation type="journal article" date="2004" name="Nature">
        <title>Genome evolution in yeasts.</title>
        <authorList>
            <person name="Dujon B."/>
            <person name="Sherman D."/>
            <person name="Fischer G."/>
            <person name="Durrens P."/>
            <person name="Casaregola S."/>
            <person name="Lafontaine I."/>
            <person name="de Montigny J."/>
            <person name="Marck C."/>
            <person name="Neuveglise C."/>
            <person name="Talla E."/>
            <person name="Goffard N."/>
            <person name="Frangeul L."/>
            <person name="Aigle M."/>
            <person name="Anthouard V."/>
            <person name="Babour A."/>
            <person name="Barbe V."/>
            <person name="Barnay S."/>
            <person name="Blanchin S."/>
            <person name="Beckerich J.-M."/>
            <person name="Beyne E."/>
            <person name="Bleykasten C."/>
            <person name="Boisrame A."/>
            <person name="Boyer J."/>
            <person name="Cattolico L."/>
            <person name="Confanioleri F."/>
            <person name="de Daruvar A."/>
            <person name="Despons L."/>
            <person name="Fabre E."/>
            <person name="Fairhead C."/>
            <person name="Ferry-Dumazet H."/>
            <person name="Groppi A."/>
            <person name="Hantraye F."/>
            <person name="Hennequin C."/>
            <person name="Jauniaux N."/>
            <person name="Joyet P."/>
            <person name="Kachouri R."/>
            <person name="Kerrest A."/>
            <person name="Koszul R."/>
            <person name="Lemaire M."/>
            <person name="Lesur I."/>
            <person name="Ma L."/>
            <person name="Muller H."/>
            <person name="Nicaud J.-M."/>
            <person name="Nikolski M."/>
            <person name="Oztas S."/>
            <person name="Ozier-Kalogeropoulos O."/>
            <person name="Pellenz S."/>
            <person name="Potier S."/>
            <person name="Richard G.-F."/>
            <person name="Straub M.-L."/>
            <person name="Suleau A."/>
            <person name="Swennen D."/>
            <person name="Tekaia F."/>
            <person name="Wesolowski-Louvel M."/>
            <person name="Westhof E."/>
            <person name="Wirth B."/>
            <person name="Zeniou-Meyer M."/>
            <person name="Zivanovic Y."/>
            <person name="Bolotin-Fukuhara M."/>
            <person name="Thierry A."/>
            <person name="Bouchier C."/>
            <person name="Caudron B."/>
            <person name="Scarpelli C."/>
            <person name="Gaillardin C."/>
            <person name="Weissenbach J."/>
            <person name="Wincker P."/>
            <person name="Souciet J.-L."/>
        </authorList>
    </citation>
    <scope>NUCLEOTIDE SEQUENCE [LARGE SCALE GENOMIC DNA]</scope>
    <source>
        <strain>ATCC 2001 / BCRC 20586 / JCM 3761 / NBRC 0622 / NRRL Y-65 / CBS 138</strain>
    </source>
</reference>
<sequence length="651" mass="73113">MFAARFDPTKVVREEPKIIPQKRAIPDDVESSDSDQDIEDGVEVGAVSKEQSGTDVTTTRAVDGKSESDSESESESESDSDDEMNFDMGGSSSSSDDDEVSSKDADVDDDGKHTSVLSRFKKTLSIQDKISALEEANTQDILEDGEAHDLAQIPQPAVVRDKKLQVKDISEMKNTAFRDTRKVHYDNSMTKSFEEYSDDLTPKLLNNIEKYFSKSTFPIQTAMLDQYLKLINFTLKTSKKNFTRRIGDILVNASTGSGKTLAYSIPIIQTLSSRTVNKLRVLIILPTKLLINQVFQTMSQLAEGTSLVITVSKLENSFNEEHKRLLKTEPDIFITTPGRLVDHLTNSSISLRNLKFLVLDEADRLLNQSFQNWIPEVMSKFKSDKFDQMPGSIIKMVFSATLTTNTEKLNDLQLYNPTLFATDSVKLYNLPPTLQEYQLQIPSAKSVYKPLYLLKLLEQLSGGKTLVFVRSNESSLKLEVLLKSLIKGHMTTLQIVVHSINSNNSKAENRRLVTDFTKESLPNQTNVLITTDLMSRGIDIENIANVINYDVPISSQQYVHRCGRTARANKDGKAYNMLVGKGEAQFWKDSIDEDISRDVSGCKPISYNDSYNKVHGDENARTSEPTRDLFTSIDSETSDKYNEILKNLTQK</sequence>
<comment type="function">
    <text evidence="1">ATP-binding RNA helicase involved in the biogenesis of 60S ribosomal subunits and is required for the normal formation of 25S and 5.8S rRNAs.</text>
</comment>
<comment type="catalytic activity">
    <reaction>
        <text>ATP + H2O = ADP + phosphate + H(+)</text>
        <dbReference type="Rhea" id="RHEA:13065"/>
        <dbReference type="ChEBI" id="CHEBI:15377"/>
        <dbReference type="ChEBI" id="CHEBI:15378"/>
        <dbReference type="ChEBI" id="CHEBI:30616"/>
        <dbReference type="ChEBI" id="CHEBI:43474"/>
        <dbReference type="ChEBI" id="CHEBI:456216"/>
        <dbReference type="EC" id="3.6.4.13"/>
    </reaction>
</comment>
<comment type="subunit">
    <text evidence="1">Associated with pre-ribosomal particles.</text>
</comment>
<comment type="subcellular location">
    <subcellularLocation>
        <location evidence="1">Nucleus</location>
        <location evidence="1">Nucleolus</location>
    </subcellularLocation>
</comment>
<comment type="domain">
    <text>The Q motif is unique to and characteristic of the DEAD box family of RNA helicases and controls ATP binding and hydrolysis.</text>
</comment>
<comment type="similarity">
    <text evidence="5">Belongs to the DEAD box helicase family. DDX51/DBP6 subfamily.</text>
</comment>
<gene>
    <name type="primary">DBP6</name>
    <name type="ordered locus">CAGL0G07975g</name>
</gene>
<dbReference type="EC" id="3.6.4.13"/>
<dbReference type="EMBL" id="CR380953">
    <property type="protein sequence ID" value="CAG59636.1"/>
    <property type="molecule type" value="Genomic_DNA"/>
</dbReference>
<dbReference type="RefSeq" id="XP_446709.1">
    <property type="nucleotide sequence ID" value="XM_446709.1"/>
</dbReference>
<dbReference type="SMR" id="Q6FST5"/>
<dbReference type="FunCoup" id="Q6FST5">
    <property type="interactions" value="934"/>
</dbReference>
<dbReference type="STRING" id="284593.Q6FST5"/>
<dbReference type="EnsemblFungi" id="CAGL0G07975g-T">
    <property type="protein sequence ID" value="CAGL0G07975g-T-p1"/>
    <property type="gene ID" value="CAGL0G07975g"/>
</dbReference>
<dbReference type="KEGG" id="cgr:2888250"/>
<dbReference type="CGD" id="CAL0130153">
    <property type="gene designation" value="CAGL0G07975g"/>
</dbReference>
<dbReference type="VEuPathDB" id="FungiDB:CAGL0G07975g"/>
<dbReference type="eggNOG" id="KOG0350">
    <property type="taxonomic scope" value="Eukaryota"/>
</dbReference>
<dbReference type="HOGENOM" id="CLU_003041_15_2_1"/>
<dbReference type="InParanoid" id="Q6FST5"/>
<dbReference type="Proteomes" id="UP000002428">
    <property type="component" value="Chromosome G"/>
</dbReference>
<dbReference type="GO" id="GO:0005730">
    <property type="term" value="C:nucleolus"/>
    <property type="evidence" value="ECO:0007669"/>
    <property type="project" value="UniProtKB-SubCell"/>
</dbReference>
<dbReference type="GO" id="GO:0030687">
    <property type="term" value="C:preribosome, large subunit precursor"/>
    <property type="evidence" value="ECO:0007669"/>
    <property type="project" value="EnsemblFungi"/>
</dbReference>
<dbReference type="GO" id="GO:0005524">
    <property type="term" value="F:ATP binding"/>
    <property type="evidence" value="ECO:0007669"/>
    <property type="project" value="UniProtKB-KW"/>
</dbReference>
<dbReference type="GO" id="GO:0016887">
    <property type="term" value="F:ATP hydrolysis activity"/>
    <property type="evidence" value="ECO:0007669"/>
    <property type="project" value="RHEA"/>
</dbReference>
<dbReference type="GO" id="GO:0003723">
    <property type="term" value="F:RNA binding"/>
    <property type="evidence" value="ECO:0007669"/>
    <property type="project" value="UniProtKB-KW"/>
</dbReference>
<dbReference type="GO" id="GO:0003724">
    <property type="term" value="F:RNA helicase activity"/>
    <property type="evidence" value="ECO:0007669"/>
    <property type="project" value="UniProtKB-EC"/>
</dbReference>
<dbReference type="GO" id="GO:0000466">
    <property type="term" value="P:maturation of 5.8S rRNA from tricistronic rRNA transcript (SSU-rRNA, 5.8S rRNA, LSU-rRNA)"/>
    <property type="evidence" value="ECO:0007669"/>
    <property type="project" value="EnsemblFungi"/>
</dbReference>
<dbReference type="GO" id="GO:0000463">
    <property type="term" value="P:maturation of LSU-rRNA from tricistronic rRNA transcript (SSU-rRNA, 5.8S rRNA, LSU-rRNA)"/>
    <property type="evidence" value="ECO:0007669"/>
    <property type="project" value="EnsemblFungi"/>
</dbReference>
<dbReference type="CDD" id="cd17956">
    <property type="entry name" value="DEADc_DDX51"/>
    <property type="match status" value="1"/>
</dbReference>
<dbReference type="CDD" id="cd18787">
    <property type="entry name" value="SF2_C_DEAD"/>
    <property type="match status" value="1"/>
</dbReference>
<dbReference type="Gene3D" id="3.40.50.300">
    <property type="entry name" value="P-loop containing nucleotide triphosphate hydrolases"/>
    <property type="match status" value="2"/>
</dbReference>
<dbReference type="InterPro" id="IPR011545">
    <property type="entry name" value="DEAD/DEAH_box_helicase_dom"/>
</dbReference>
<dbReference type="InterPro" id="IPR014001">
    <property type="entry name" value="Helicase_ATP-bd"/>
</dbReference>
<dbReference type="InterPro" id="IPR001650">
    <property type="entry name" value="Helicase_C-like"/>
</dbReference>
<dbReference type="InterPro" id="IPR027417">
    <property type="entry name" value="P-loop_NTPase"/>
</dbReference>
<dbReference type="InterPro" id="IPR000629">
    <property type="entry name" value="RNA-helicase_DEAD-box_CS"/>
</dbReference>
<dbReference type="PANTHER" id="PTHR24031">
    <property type="entry name" value="RNA HELICASE"/>
    <property type="match status" value="1"/>
</dbReference>
<dbReference type="Pfam" id="PF00270">
    <property type="entry name" value="DEAD"/>
    <property type="match status" value="1"/>
</dbReference>
<dbReference type="Pfam" id="PF00271">
    <property type="entry name" value="Helicase_C"/>
    <property type="match status" value="1"/>
</dbReference>
<dbReference type="SMART" id="SM00487">
    <property type="entry name" value="DEXDc"/>
    <property type="match status" value="1"/>
</dbReference>
<dbReference type="SMART" id="SM00490">
    <property type="entry name" value="HELICc"/>
    <property type="match status" value="1"/>
</dbReference>
<dbReference type="SUPFAM" id="SSF52540">
    <property type="entry name" value="P-loop containing nucleoside triphosphate hydrolases"/>
    <property type="match status" value="1"/>
</dbReference>
<dbReference type="PROSITE" id="PS00039">
    <property type="entry name" value="DEAD_ATP_HELICASE"/>
    <property type="match status" value="1"/>
</dbReference>
<dbReference type="PROSITE" id="PS51192">
    <property type="entry name" value="HELICASE_ATP_BIND_1"/>
    <property type="match status" value="1"/>
</dbReference>
<dbReference type="PROSITE" id="PS51194">
    <property type="entry name" value="HELICASE_CTER"/>
    <property type="match status" value="1"/>
</dbReference>
<protein>
    <recommendedName>
        <fullName>ATP-dependent RNA helicase DBP6</fullName>
        <ecNumber>3.6.4.13</ecNumber>
    </recommendedName>
</protein>
<feature type="chain" id="PRO_0000232293" description="ATP-dependent RNA helicase DBP6">
    <location>
        <begin position="1"/>
        <end position="651"/>
    </location>
</feature>
<feature type="domain" description="Helicase ATP-binding" evidence="2">
    <location>
        <begin position="240"/>
        <end position="420"/>
    </location>
</feature>
<feature type="domain" description="Helicase C-terminal" evidence="3">
    <location>
        <begin position="452"/>
        <end position="611"/>
    </location>
</feature>
<feature type="region of interest" description="Disordered" evidence="4">
    <location>
        <begin position="1"/>
        <end position="114"/>
    </location>
</feature>
<feature type="short sequence motif" description="Q motif">
    <location>
        <begin position="216"/>
        <end position="224"/>
    </location>
</feature>
<feature type="short sequence motif" description="DEAD box">
    <location>
        <begin position="360"/>
        <end position="363"/>
    </location>
</feature>
<feature type="compositionally biased region" description="Basic and acidic residues" evidence="4">
    <location>
        <begin position="7"/>
        <end position="17"/>
    </location>
</feature>
<feature type="compositionally biased region" description="Acidic residues" evidence="4">
    <location>
        <begin position="27"/>
        <end position="42"/>
    </location>
</feature>
<feature type="compositionally biased region" description="Polar residues" evidence="4">
    <location>
        <begin position="49"/>
        <end position="60"/>
    </location>
</feature>
<feature type="compositionally biased region" description="Acidic residues" evidence="4">
    <location>
        <begin position="69"/>
        <end position="85"/>
    </location>
</feature>
<feature type="compositionally biased region" description="Basic and acidic residues" evidence="4">
    <location>
        <begin position="100"/>
        <end position="113"/>
    </location>
</feature>
<feature type="binding site" evidence="2">
    <location>
        <begin position="253"/>
        <end position="260"/>
    </location>
    <ligand>
        <name>ATP</name>
        <dbReference type="ChEBI" id="CHEBI:30616"/>
    </ligand>
</feature>
<name>DBP6_CANGA</name>